<feature type="signal peptide" evidence="4">
    <location>
        <begin position="1"/>
        <end position="24"/>
    </location>
</feature>
<feature type="chain" id="PRO_0000011533" description="Glutamate receptor 2">
    <location>
        <begin position="25"/>
        <end position="883"/>
    </location>
</feature>
<feature type="topological domain" description="Extracellular" evidence="1">
    <location>
        <begin position="25"/>
        <end position="543"/>
    </location>
</feature>
<feature type="transmembrane region" description="Helical" evidence="1">
    <location>
        <begin position="544"/>
        <end position="564"/>
    </location>
</feature>
<feature type="topological domain" description="Cytoplasmic" evidence="1">
    <location>
        <begin position="565"/>
        <end position="591"/>
    </location>
</feature>
<feature type="intramembrane region" description="Helical; Pore-forming" evidence="1">
    <location>
        <begin position="592"/>
        <end position="607"/>
    </location>
</feature>
<feature type="intramembrane region" evidence="1">
    <location>
        <begin position="608"/>
        <end position="610"/>
    </location>
</feature>
<feature type="topological domain" description="Cytoplasmic" evidence="1">
    <location>
        <begin position="611"/>
        <end position="616"/>
    </location>
</feature>
<feature type="transmembrane region" description="Helical" evidence="1">
    <location>
        <begin position="617"/>
        <end position="637"/>
    </location>
</feature>
<feature type="topological domain" description="Extracellular" evidence="1">
    <location>
        <begin position="638"/>
        <end position="812"/>
    </location>
</feature>
<feature type="transmembrane region" description="Helical; Name=M4" evidence="1">
    <location>
        <begin position="813"/>
        <end position="833"/>
    </location>
</feature>
<feature type="topological domain" description="Cytoplasmic" evidence="1">
    <location>
        <begin position="834"/>
        <end position="883"/>
    </location>
</feature>
<feature type="region of interest" description="Required for interaction with IQSEC1" evidence="2">
    <location>
        <begin position="867"/>
        <end position="877"/>
    </location>
</feature>
<feature type="binding site" evidence="3">
    <location>
        <position position="499"/>
    </location>
    <ligand>
        <name>L-glutamate</name>
        <dbReference type="ChEBI" id="CHEBI:29985"/>
    </ligand>
</feature>
<feature type="binding site" evidence="3">
    <location>
        <position position="501"/>
    </location>
    <ligand>
        <name>L-glutamate</name>
        <dbReference type="ChEBI" id="CHEBI:29985"/>
    </ligand>
</feature>
<feature type="binding site" evidence="3">
    <location>
        <position position="506"/>
    </location>
    <ligand>
        <name>L-glutamate</name>
        <dbReference type="ChEBI" id="CHEBI:29985"/>
    </ligand>
</feature>
<feature type="binding site" evidence="3">
    <location>
        <position position="675"/>
    </location>
    <ligand>
        <name>L-glutamate</name>
        <dbReference type="ChEBI" id="CHEBI:29985"/>
    </ligand>
</feature>
<feature type="binding site" evidence="3">
    <location>
        <position position="676"/>
    </location>
    <ligand>
        <name>L-glutamate</name>
        <dbReference type="ChEBI" id="CHEBI:29985"/>
    </ligand>
</feature>
<feature type="binding site" evidence="3">
    <location>
        <position position="726"/>
    </location>
    <ligand>
        <name>L-glutamate</name>
        <dbReference type="ChEBI" id="CHEBI:29985"/>
    </ligand>
</feature>
<feature type="modified residue" description="Phosphoserine; by PKC" evidence="2">
    <location>
        <position position="683"/>
    </location>
</feature>
<feature type="modified residue" description="Phosphoserine; by PKG" evidence="2">
    <location>
        <position position="717"/>
    </location>
</feature>
<feature type="modified residue" description="Phosphoserine" evidence="22">
    <location>
        <position position="860"/>
    </location>
</feature>
<feature type="modified residue" description="Phosphoserine" evidence="22">
    <location>
        <position position="863"/>
    </location>
</feature>
<feature type="modified residue" description="Phosphotyrosine" evidence="10">
    <location>
        <position position="876"/>
    </location>
</feature>
<feature type="modified residue" description="Phosphoserine" evidence="6">
    <location>
        <position position="880"/>
    </location>
</feature>
<feature type="lipid moiety-binding region" description="S-palmitoyl cysteine" evidence="11">
    <location>
        <position position="610"/>
    </location>
</feature>
<feature type="lipid moiety-binding region" description="S-palmitoyl cysteine" evidence="11">
    <location>
        <position position="836"/>
    </location>
</feature>
<feature type="glycosylation site" description="N-linked (GlcNAc...) asparagine" evidence="4">
    <location>
        <position position="256"/>
    </location>
</feature>
<feature type="glycosylation site" description="N-linked (GlcNAc...) asparagine" evidence="4">
    <location>
        <position position="370"/>
    </location>
</feature>
<feature type="glycosylation site" description="N-linked (GlcNAc...) asparagine" evidence="4">
    <location>
        <position position="406"/>
    </location>
</feature>
<feature type="glycosylation site" description="N-linked (GlcNAc...) asparagine" evidence="4">
    <location>
        <position position="413"/>
    </location>
</feature>
<feature type="disulfide bond" evidence="3">
    <location>
        <begin position="78"/>
        <end position="330"/>
    </location>
</feature>
<feature type="disulfide bond" evidence="2">
    <location>
        <begin position="739"/>
        <end position="794"/>
    </location>
</feature>
<feature type="splice variant" id="VSP_000106" description="In isoform 2." evidence="19">
    <original>S</original>
    <variation>T</variation>
    <location>
        <position position="761"/>
    </location>
</feature>
<feature type="splice variant" id="VSP_000107" description="In isoform 2." evidence="19">
    <original>NAV</original>
    <variation>WVE</variation>
    <location>
        <begin position="765"/>
        <end position="767"/>
    </location>
</feature>
<feature type="splice variant" id="VSP_000108" description="In isoform 2." evidence="19">
    <location>
        <begin position="768"/>
        <end position="883"/>
    </location>
</feature>
<feature type="splice variant" id="VSP_000109" description="In isoform 3 and isoform 4." evidence="20">
    <original>K</original>
    <variation>KTPVNLAVLKLSEQGVLDKLKNKWWYDKGECGAKDSGSK</variation>
    <location>
        <position position="802"/>
    </location>
</feature>
<feature type="splice variant" id="VSP_000110" description="In isoform 3." evidence="20">
    <original>VAKNAQNINPSSSQNSQNFATYKEGYNVYGIESVKI</original>
    <variation>MTLSAATRNKARLSITGSTGENGRVMTPEFPKAVHAVPYVSPGMGMNVSVTDLS</variation>
    <location>
        <begin position="848"/>
        <end position="883"/>
    </location>
</feature>
<feature type="sequence variant" description="In RNA edited version.">
    <original>Q</original>
    <variation>R</variation>
    <location>
        <position position="607"/>
    </location>
</feature>
<feature type="mutagenesis site" description="No effect on tyrosine phosphorylation. Reduced tyrosine phosphorylation; when associated with F-873 and F-876." evidence="10">
    <original>Y</original>
    <variation>F</variation>
    <location>
        <position position="869"/>
    </location>
</feature>
<feature type="mutagenesis site" description="No effect on tyrosine phosphorylation. Reduced tyrosine phosphorylation; when associated with F-869 and F-876." evidence="10">
    <original>Y</original>
    <variation>F</variation>
    <location>
        <position position="873"/>
    </location>
</feature>
<feature type="mutagenesis site" description="Loss of tyrosine phosphorylation at the C-terminus. Reduced tyrosine phosphorylation; when associated with F-869 and F-873. Interferes with accumulation at synapses. Interferes with AMPA-mediated receptor internalization." evidence="10">
    <original>Y</original>
    <variation>F</variation>
    <location>
        <position position="876"/>
    </location>
</feature>
<feature type="sequence conflict" description="In Ref. 1; CAA40735." evidence="20" ref="1">
    <original>D</original>
    <variation>V</variation>
    <location>
        <position position="264"/>
    </location>
</feature>
<feature type="sequence conflict" description="In Ref. 1; CAA40735." evidence="20" ref="1">
    <original>V</original>
    <variation>A</variation>
    <location>
        <position position="270"/>
    </location>
</feature>
<feature type="sequence conflict" description="In Ref. 1; CAA40735." evidence="20" ref="1">
    <original>E</original>
    <variation>G</variation>
    <location>
        <position position="282"/>
    </location>
</feature>
<feature type="sequence conflict" description="In Ref. 3; BAB29316." evidence="20" ref="3">
    <original>N</original>
    <variation>H</variation>
    <location>
        <position position="374"/>
    </location>
</feature>
<feature type="sequence conflict" description="In Ref. 3; BAC31557." evidence="20" ref="3">
    <original>N</original>
    <variation>K</variation>
    <location>
        <position position="482"/>
    </location>
</feature>
<feature type="sequence conflict" description="In Ref. 3; BAB29316." evidence="20" ref="3">
    <original>F</original>
    <variation>L</variation>
    <location>
        <position position="552"/>
    </location>
</feature>
<feature type="sequence conflict" description="In Ref. 2; AAC37653." evidence="20" ref="2">
    <original>G</original>
    <variation>R</variation>
    <location>
        <position position="764"/>
    </location>
</feature>
<feature type="strand" evidence="23">
    <location>
        <begin position="27"/>
        <end position="34"/>
    </location>
</feature>
<feature type="helix" evidence="23">
    <location>
        <begin position="38"/>
        <end position="50"/>
    </location>
</feature>
<feature type="strand" evidence="23">
    <location>
        <begin position="58"/>
        <end position="65"/>
    </location>
</feature>
<feature type="helix" evidence="23">
    <location>
        <begin position="70"/>
        <end position="81"/>
    </location>
</feature>
<feature type="turn" evidence="23">
    <location>
        <begin position="82"/>
        <end position="84"/>
    </location>
</feature>
<feature type="strand" evidence="23">
    <location>
        <begin position="86"/>
        <end position="90"/>
    </location>
</feature>
<feature type="turn" evidence="23">
    <location>
        <begin position="94"/>
        <end position="96"/>
    </location>
</feature>
<feature type="helix" evidence="23">
    <location>
        <begin position="97"/>
        <end position="107"/>
    </location>
</feature>
<feature type="helix" evidence="23">
    <location>
        <begin position="133"/>
        <end position="143"/>
    </location>
</feature>
<feature type="strand" evidence="23">
    <location>
        <begin position="147"/>
        <end position="152"/>
    </location>
</feature>
<feature type="helix" evidence="23">
    <location>
        <begin position="154"/>
        <end position="156"/>
    </location>
</feature>
<feature type="helix" evidence="23">
    <location>
        <begin position="159"/>
        <end position="171"/>
    </location>
</feature>
<feature type="strand" evidence="23">
    <location>
        <begin position="174"/>
        <end position="179"/>
    </location>
</feature>
<feature type="strand" evidence="23">
    <location>
        <begin position="185"/>
        <end position="187"/>
    </location>
</feature>
<feature type="helix" evidence="23">
    <location>
        <begin position="188"/>
        <end position="201"/>
    </location>
</feature>
<feature type="strand" evidence="23">
    <location>
        <begin position="206"/>
        <end position="209"/>
    </location>
</feature>
<feature type="helix" evidence="23">
    <location>
        <begin position="215"/>
        <end position="226"/>
    </location>
</feature>
<feature type="strand" evidence="23">
    <location>
        <begin position="234"/>
        <end position="237"/>
    </location>
</feature>
<feature type="turn" evidence="23">
    <location>
        <begin position="248"/>
        <end position="253"/>
    </location>
</feature>
<feature type="strand" evidence="23">
    <location>
        <begin position="256"/>
        <end position="263"/>
    </location>
</feature>
<feature type="strand" evidence="23">
    <location>
        <begin position="265"/>
        <end position="267"/>
    </location>
</feature>
<feature type="helix" evidence="23">
    <location>
        <begin position="268"/>
        <end position="275"/>
    </location>
</feature>
<feature type="turn" evidence="23">
    <location>
        <begin position="276"/>
        <end position="279"/>
    </location>
</feature>
<feature type="turn" evidence="23">
    <location>
        <begin position="282"/>
        <end position="284"/>
    </location>
</feature>
<feature type="strand" evidence="23">
    <location>
        <begin position="289"/>
        <end position="292"/>
    </location>
</feature>
<feature type="helix" evidence="23">
    <location>
        <begin position="295"/>
        <end position="316"/>
    </location>
</feature>
<feature type="helix" evidence="23">
    <location>
        <begin position="341"/>
        <end position="349"/>
    </location>
</feature>
<feature type="strand" evidence="23">
    <location>
        <begin position="352"/>
        <end position="355"/>
    </location>
</feature>
<feature type="strand" evidence="23">
    <location>
        <begin position="358"/>
        <end position="362"/>
    </location>
</feature>
<feature type="strand" evidence="23">
    <location>
        <begin position="368"/>
        <end position="370"/>
    </location>
</feature>
<feature type="strand" evidence="23">
    <location>
        <begin position="373"/>
        <end position="379"/>
    </location>
</feature>
<feature type="strand" evidence="23">
    <location>
        <begin position="382"/>
        <end position="389"/>
    </location>
</feature>
<feature type="strand" evidence="23">
    <location>
        <begin position="391"/>
        <end position="393"/>
    </location>
</feature>
<feature type="turn" evidence="24">
    <location>
        <begin position="424"/>
        <end position="426"/>
    </location>
</feature>
<feature type="turn" evidence="24">
    <location>
        <begin position="431"/>
        <end position="435"/>
    </location>
</feature>
<feature type="turn" evidence="24">
    <location>
        <begin position="439"/>
        <end position="441"/>
    </location>
</feature>
<feature type="helix" evidence="24">
    <location>
        <begin position="445"/>
        <end position="456"/>
    </location>
</feature>
<feature type="strand" evidence="24">
    <location>
        <begin position="467"/>
        <end position="470"/>
    </location>
</feature>
<feature type="turn" evidence="24">
    <location>
        <begin position="476"/>
        <end position="478"/>
    </location>
</feature>
<feature type="turn" evidence="24">
    <location>
        <begin position="483"/>
        <end position="485"/>
    </location>
</feature>
<feature type="helix" evidence="24">
    <location>
        <begin position="486"/>
        <end position="489"/>
    </location>
</feature>
<feature type="strand" evidence="24">
    <location>
        <begin position="491"/>
        <end position="494"/>
    </location>
</feature>
<feature type="helix" evidence="24">
    <location>
        <begin position="504"/>
        <end position="507"/>
    </location>
</feature>
<feature type="strand" evidence="24">
    <location>
        <begin position="516"/>
        <end position="519"/>
    </location>
</feature>
<feature type="strand" evidence="24">
    <location>
        <begin position="524"/>
        <end position="526"/>
    </location>
</feature>
<feature type="helix" evidence="23">
    <location>
        <begin position="537"/>
        <end position="539"/>
    </location>
</feature>
<feature type="strand" evidence="23">
    <location>
        <begin position="540"/>
        <end position="542"/>
    </location>
</feature>
<feature type="helix" evidence="24">
    <location>
        <begin position="544"/>
        <end position="565"/>
    </location>
</feature>
<feature type="helix" evidence="24">
    <location>
        <begin position="594"/>
        <end position="605"/>
    </location>
</feature>
<feature type="helix" evidence="24">
    <location>
        <begin position="618"/>
        <end position="646"/>
    </location>
</feature>
<feature type="helix" evidence="24">
    <location>
        <begin position="657"/>
        <end position="663"/>
    </location>
</feature>
<feature type="strand" evidence="24">
    <location>
        <begin position="665"/>
        <end position="669"/>
    </location>
</feature>
<feature type="strand" evidence="24">
    <location>
        <begin position="671"/>
        <end position="674"/>
    </location>
</feature>
<feature type="helix" evidence="24">
    <location>
        <begin position="675"/>
        <end position="681"/>
    </location>
</feature>
<feature type="helix" evidence="24">
    <location>
        <begin position="686"/>
        <end position="696"/>
    </location>
</feature>
<feature type="strand" evidence="24">
    <location>
        <begin position="703"/>
        <end position="706"/>
    </location>
</feature>
<feature type="helix" evidence="24">
    <location>
        <begin position="707"/>
        <end position="716"/>
    </location>
</feature>
<feature type="strand" evidence="24">
    <location>
        <begin position="717"/>
        <end position="723"/>
    </location>
</feature>
<feature type="helix" evidence="24">
    <location>
        <begin position="727"/>
        <end position="733"/>
    </location>
</feature>
<feature type="strand" evidence="24">
    <location>
        <begin position="741"/>
        <end position="743"/>
    </location>
</feature>
<feature type="strand" evidence="24">
    <location>
        <begin position="751"/>
        <end position="753"/>
    </location>
</feature>
<feature type="helix" evidence="24">
    <location>
        <begin position="765"/>
        <end position="776"/>
    </location>
</feature>
<feature type="helix" evidence="24">
    <location>
        <begin position="779"/>
        <end position="789"/>
    </location>
</feature>
<feature type="strand" evidence="24">
    <location>
        <begin position="798"/>
        <end position="801"/>
    </location>
</feature>
<feature type="helix" evidence="24">
    <location>
        <begin position="810"/>
        <end position="838"/>
    </location>
</feature>
<name>GRIA2_MOUSE</name>
<comment type="function">
    <text evidence="2 3">Ionotropic glutamate receptor that functions as a ligand-gated cation channel, gated by L-glutamate and glutamatergic agonists such as alpha-amino-3-hydroxy-5-methyl-4-isoxazolepropionic acid (AMPA), quisqualic acid, and kainic acid (By similarity). L-glutamate acts as an excitatory neurotransmitter at many synapses in the central nervous system and plays an important role in fast excitatory synaptic transmission (By similarity). Binding of the excitatory neurotransmitter L-glutamate induces a conformation change, leading to the opening of the cation channel, and thereby converts the chemical signal to an electrical impulse upon entry of monovalent and divalent cations such as sodium and calcium. The receptor then desensitizes rapidly and enters in a transient inactive state, characterized by the presence of bound agonist. In the presence of CACNG4 or CACNG7 or CACNG8, shows resensitization which is characterized by a delayed accumulation of current flux upon continued application of L-glutamate. Through complex formation with NSG1, GRIP1 and STX12 controls the intracellular fate of AMPAR and the endosomal sorting of the GRIA2 subunit toward recycling and membrane targeting (By similarity).</text>
</comment>
<comment type="catalytic activity">
    <reaction evidence="2">
        <text>Ca(2+)(in) = Ca(2+)(out)</text>
        <dbReference type="Rhea" id="RHEA:29671"/>
        <dbReference type="ChEBI" id="CHEBI:29108"/>
    </reaction>
</comment>
<comment type="catalytic activity">
    <reaction evidence="2">
        <text>Na(+)(in) = Na(+)(out)</text>
        <dbReference type="Rhea" id="RHEA:34963"/>
        <dbReference type="ChEBI" id="CHEBI:29101"/>
    </reaction>
</comment>
<comment type="subunit">
    <text evidence="2 5 7 8 10 13 14 16 17 18">Homotetramer or heterotetramer of pore-forming glutamate receptor subunits (By similarity). Tetramers may be formed by the dimerization of dimers (By similarity). May interact with MPP4 (PubMed:10558890). Forms a ternary complex with GRIP1 and CSPG4 (PubMed:12458226). Interacts with ATAD1 in an ATP-dependent manner (PubMed:21496646). ATAD1-catalyzed ATP hydrolysis disrupts binding to ATAD1 and to GRIP1 and leads to AMPAR complex disassembly (PubMed:21496646). Interacts with GRIP1 and GRIP2 (PubMed:15240807). Interacts with NSF via its C-terminus (By similarity). Isoform 1, but not isoform 3, interacts with PICK1 (PubMed:10340301, PubMed:15240807). Interacts with CACNG2 (By similarity). Interacts with GRIA1 and SYNDIG1 (PubMed:18341993, PubMed:20152115). Part of a complex containing GRIA2, NSF and NAPA and/or NAPB (By similarity). Interacts with SNX27 (via PDZ domain); the interaction is required for recycling to the plasma membrane when endocytosed and prevent degradation in lysosomes (PubMed:23524343). Interacts with LRFN1 (By similarity). Found in a complex with GRIA1, GRIA3, GRIA4, CNIH2, CNIH3, CACNG2, CACNG3, CACNG4, CACNG5, CACNG7 and CACNG8 (By similarity). Interacts with CACNG5 (By similarity). Interacts with OLFM2 (PubMed:25218043). Interacts with AP4B1, AP4E1 and AP4M1; probably indirect it mediates the somatodendritic localization of GRIA2 in neurons (PubMed:18341993). Forms a complex with GRIP1, NSG1 and STX12; controls the intracellular fate of AMPAR and the endosomal sorting of the GRIA2 subunit toward recycling and membrane targeting (By similarity). Interacts with IQSEC1; the interaction is required for ARF6 activation (By similarity). Interacts (heterotetramer form) with CNIH2 and CNIH3; this interaction promotes expression at the plasma membrane and extensively modulates their gating properties by slowing deactivation and desensitization kinetics (By similarity).</text>
</comment>
<comment type="interaction">
    <interactant intactId="EBI-77538">
        <id>P23819</id>
    </interactant>
    <interactant intactId="EBI-8327479">
        <id>Q8VHY0</id>
        <label>Cspg4</label>
    </interactant>
    <organismsDiffer>false</organismsDiffer>
    <experiments>2</experiments>
</comment>
<comment type="interaction">
    <interactant intactId="EBI-77538">
        <id>P23819</id>
    </interactant>
    <interactant intactId="EBI-444871">
        <id>P16858</id>
        <label>Gapdh</label>
    </interactant>
    <organismsDiffer>false</organismsDiffer>
    <experiments>2</experiments>
</comment>
<comment type="interaction">
    <interactant intactId="EBI-77538">
        <id>P23819</id>
    </interactant>
    <interactant intactId="EBI-445486">
        <id>P23818</id>
        <label>Gria1</label>
    </interactant>
    <organismsDiffer>false</organismsDiffer>
    <experiments>4</experiments>
</comment>
<comment type="interaction">
    <interactant intactId="EBI-77538">
        <id>P23819</id>
    </interactant>
    <interactant intactId="EBI-537752">
        <id>Q925T6</id>
        <label>Grip1</label>
    </interactant>
    <organismsDiffer>false</organismsDiffer>
    <experiments>5</experiments>
</comment>
<comment type="subcellular location">
    <subcellularLocation>
        <location evidence="3">Cell membrane</location>
        <topology evidence="3">Multi-pass membrane protein</topology>
    </subcellularLocation>
    <subcellularLocation>
        <location evidence="15">Postsynaptic cell membrane</location>
        <topology evidence="3">Multi-pass membrane protein</topology>
    </subcellularLocation>
    <subcellularLocation>
        <location evidence="15">Postsynaptic density membrane</location>
        <topology evidence="4">Multi-pass membrane protein</topology>
    </subcellularLocation>
    <text evidence="2 13">Interaction with CACNG2, CNIH2 and CNIH3 promotes cell surface expression (By similarity). Displays a somatodendritic localization and is excluded from axons in neurons (PubMed:18341993).</text>
</comment>
<comment type="alternative products">
    <event type="alternative splicing"/>
    <isoform>
        <id>P23819-1</id>
        <name>1</name>
        <sequence type="displayed"/>
    </isoform>
    <isoform>
        <id>P23819-2</id>
        <name>2</name>
        <sequence type="described" ref="VSP_000106 VSP_000107 VSP_000108"/>
    </isoform>
    <isoform>
        <id>P23819-3</id>
        <name>3</name>
        <sequence type="described" ref="VSP_000109 VSP_000110"/>
    </isoform>
    <isoform>
        <id>P23819-4</id>
        <name>4</name>
        <sequence type="described" ref="VSP_000109"/>
    </isoform>
</comment>
<comment type="tissue specificity">
    <text evidence="9 10 15">Detected in brain cortex, hippocampus and cerebellum (at protein level) (PubMed:15240807). Detected in hippocampus (PubMed:14687553, PubMed:20547133).</text>
</comment>
<comment type="developmental stage">
    <text evidence="9 15">Detected at low levels in newborns (PubMed:20547133). Levels increase strongly and are highest in hippocampus from 7 day olds (PubMed:20547133). Detected at low levels in hippocampus and olfactory bulb of 3 month olds (PubMed:14687553).</text>
</comment>
<comment type="domain">
    <text evidence="3">The M4 transmembrane segment mediates tetramerization and is required for cell surface expression.</text>
</comment>
<comment type="PTM">
    <text evidence="11">Palmitoylated (PubMed:16129400). Depalmitoylated upon L-glutamate stimulation (PubMed:16129400). ZDHHC3/GODZ specifically palmitoylates Cys-610, which leads to Golgi retention and decreased cell surface expression (PubMed:16129400). In contrast, Cys-836 palmitoylation does not affect cell surface expression but regulates stimulation-dependent endocytosis (PubMed:16129400).</text>
</comment>
<comment type="PTM">
    <text evidence="9">N-glycosylated.</text>
</comment>
<comment type="PTM">
    <text evidence="3">Ubiquitinated by RNF167, leading to its degradation.</text>
</comment>
<comment type="PTM">
    <text evidence="2">Phosphorylation at Tyr-876 is required for interaction with IQSEC1 and ARF6 activation, which in turn triggers AMPAR internalization for persistent synaptic depression.</text>
</comment>
<comment type="RNA editing">
    <location>
        <position position="607" evidence="12"/>
    </location>
    <text evidence="3">Fully edited in the brain. Heteromerically expressed edited GLUR2 (R) receptor complexes are impermeable to calcium, whereas the unedited (Q) forms are highly permeable to divalent ions.</text>
</comment>
<comment type="miscellaneous">
    <text evidence="2">The postsynaptic actions of L-glutamate are mediated by a variety of receptors that are named according to their selective agonists. This receptor binds AMPA (quisqualate) &gt; L-glutamate &gt; kainate.</text>
</comment>
<comment type="similarity">
    <text evidence="20">Belongs to the glutamate-gated ion channel (TC 1.A.10.1) family. GRIA2 subfamily.</text>
</comment>
<protein>
    <recommendedName>
        <fullName evidence="20">Glutamate receptor 2</fullName>
        <shortName>GluR-2</shortName>
    </recommendedName>
    <alternativeName>
        <fullName>AMPA-selective glutamate receptor 2</fullName>
    </alternativeName>
    <alternativeName>
        <fullName>GluR-B</fullName>
    </alternativeName>
    <alternativeName>
        <fullName>GluR-K2</fullName>
    </alternativeName>
    <alternativeName>
        <fullName>Glutamate receptor ionotropic, AMPA 2</fullName>
    </alternativeName>
</protein>
<sequence>MQKIMHISVLLSPVLWGLIFGVSSNSIQIGGLFPRGADQEYSAFRVGMVQFSTSEFRLTPHIDNLEVANSFAVTNAFCSQFSRGVYAIFGFYDKKSVNTITSFCGTLHVSFITPSFPTDGTHPFVIQMRPDLKGALLSLIEYYQWDKFAYLYDSDRGLSTLQAVLDSAAEKKWQVTAINVGNINNDKKDETYRSLFQDLELKKERRVILDCERDKVNDIVDQVITIGKHVKGYHYIIANLGFTDGDLLKIQFGGANVSGFQIVDYDDSLVSKFIERWSTLEEKEYPGAHTATIKYTSALTYDAVQVMTEAFRNLRKQRIEISRRGNAGDCLANPAVPWGQGVEIERALKQVQVEGLSGNIKFDQNGKRINYTINIMELKTNGPRKIGYWSEVDKMVVTLTELPSGNDTSGLENKTVVVTTILESPYVMMKKNHEMLEGNERYEGYCVDLAAEIAKHCGFKYKLTIVGDGKYGARDADTKIWNGMVGELVYGKADIAIAPLTITLVREEVIDFSKPFMSLGISIMIKKPQKSKPGVFSFLDPLAYEIWMCIVFAYIGVSVVLFLVSRFSPYEWHTEEFEDGRETQSSESTNEFGIFNSLWFSLGAFMQQGCDISPRSLSGRIVGGVWWFFTLIIISSYTANLAAFLTVERMVSPIESAEDLSKQTEIAYGTLDSGSTKEFFRRSKIAVFDKMWTYMRSAEPSVFVRTTAEGVARVRKSKGKYAYLLESTMNEYIEQRKPCDTMKVGGNLDSKGYGIATPKGSSLGNAVNLAVLKLNEQGLLDKLKNKWWYDKGECGSGGGDSKEKTSALSLSNVAGVFYILVGGLGLAMLVALIEFCYKSRAEAKRMKVAKNAQNINPSSSQNSQNFATYKEGYNVYGIESVKI</sequence>
<keyword id="KW-0002">3D-structure</keyword>
<keyword id="KW-0025">Alternative splicing</keyword>
<keyword id="KW-1003">Cell membrane</keyword>
<keyword id="KW-1015">Disulfide bond</keyword>
<keyword id="KW-0325">Glycoprotein</keyword>
<keyword id="KW-0407">Ion channel</keyword>
<keyword id="KW-0406">Ion transport</keyword>
<keyword id="KW-1071">Ligand-gated ion channel</keyword>
<keyword id="KW-0449">Lipoprotein</keyword>
<keyword id="KW-0472">Membrane</keyword>
<keyword id="KW-0564">Palmitate</keyword>
<keyword id="KW-0597">Phosphoprotein</keyword>
<keyword id="KW-0628">Postsynaptic cell membrane</keyword>
<keyword id="KW-0675">Receptor</keyword>
<keyword id="KW-1185">Reference proteome</keyword>
<keyword id="KW-0691">RNA editing</keyword>
<keyword id="KW-0732">Signal</keyword>
<keyword id="KW-0770">Synapse</keyword>
<keyword id="KW-0812">Transmembrane</keyword>
<keyword id="KW-1133">Transmembrane helix</keyword>
<keyword id="KW-0813">Transport</keyword>
<keyword id="KW-0832">Ubl conjugation</keyword>
<proteinExistence type="evidence at protein level"/>
<evidence type="ECO:0000250" key="1"/>
<evidence type="ECO:0000250" key="2">
    <source>
        <dbReference type="UniProtKB" id="P19491"/>
    </source>
</evidence>
<evidence type="ECO:0000250" key="3">
    <source>
        <dbReference type="UniProtKB" id="P42262"/>
    </source>
</evidence>
<evidence type="ECO:0000255" key="4"/>
<evidence type="ECO:0000269" key="5">
    <source>
    </source>
</evidence>
<evidence type="ECO:0000269" key="6">
    <source>
    </source>
</evidence>
<evidence type="ECO:0000269" key="7">
    <source>
    </source>
</evidence>
<evidence type="ECO:0000269" key="8">
    <source>
    </source>
</evidence>
<evidence type="ECO:0000269" key="9">
    <source>
    </source>
</evidence>
<evidence type="ECO:0000269" key="10">
    <source>
    </source>
</evidence>
<evidence type="ECO:0000269" key="11">
    <source>
    </source>
</evidence>
<evidence type="ECO:0000269" key="12">
    <source>
    </source>
</evidence>
<evidence type="ECO:0000269" key="13">
    <source>
    </source>
</evidence>
<evidence type="ECO:0000269" key="14">
    <source>
    </source>
</evidence>
<evidence type="ECO:0000269" key="15">
    <source>
    </source>
</evidence>
<evidence type="ECO:0000269" key="16">
    <source>
    </source>
</evidence>
<evidence type="ECO:0000269" key="17">
    <source>
    </source>
</evidence>
<evidence type="ECO:0000269" key="18">
    <source>
    </source>
</evidence>
<evidence type="ECO:0000303" key="19">
    <source>
    </source>
</evidence>
<evidence type="ECO:0000305" key="20"/>
<evidence type="ECO:0000312" key="21">
    <source>
        <dbReference type="MGI" id="MGI:95809"/>
    </source>
</evidence>
<evidence type="ECO:0007744" key="22">
    <source>
    </source>
</evidence>
<evidence type="ECO:0007829" key="23">
    <source>
        <dbReference type="PDB" id="7LDD"/>
    </source>
</evidence>
<evidence type="ECO:0007829" key="24">
    <source>
        <dbReference type="PDB" id="7LEP"/>
    </source>
</evidence>
<accession>P23819</accession>
<accession>Q61604</accession>
<accession>Q61605</accession>
<accession>Q8BG69</accession>
<accession>Q8BXU3</accession>
<accession>Q9D6D3</accession>
<reference key="1">
    <citation type="journal article" date="1990" name="FEBS Lett.">
        <title>Functional expression from cloned cDNAs of glutamate receptor species responsive to kainate and quisqualate.</title>
        <authorList>
            <person name="Sakimura K."/>
            <person name="Bujo H."/>
            <person name="Kushiya E."/>
            <person name="Araki K."/>
            <person name="Yamazaki M."/>
            <person name="Yamazaki M."/>
            <person name="Meguro H."/>
            <person name="Warashina A."/>
            <person name="Numa S."/>
            <person name="Mishina M."/>
        </authorList>
    </citation>
    <scope>NUCLEOTIDE SEQUENCE [MRNA] (ISOFORM 1)</scope>
</reference>
<reference key="2">
    <citation type="journal article" date="1994" name="J. Biol. Chem.">
        <title>The organization of the gene for the functionally dominant alpha-amino-3-hydroxy-5-methylisoxazole-4-propionic acid receptor subunit GluR-B.</title>
        <authorList>
            <person name="Koehler M."/>
            <person name="Kornau H.-C."/>
            <person name="Seeburg P.H."/>
        </authorList>
    </citation>
    <scope>NUCLEOTIDE SEQUENCE [GENOMIC DNA] (ISOFORMS 3 AND 4)</scope>
    <source>
        <strain>BALB/cJ</strain>
        <tissue>Liver</tissue>
    </source>
</reference>
<reference key="3">
    <citation type="journal article" date="2005" name="Science">
        <title>The transcriptional landscape of the mammalian genome.</title>
        <authorList>
            <person name="Carninci P."/>
            <person name="Kasukawa T."/>
            <person name="Katayama S."/>
            <person name="Gough J."/>
            <person name="Frith M.C."/>
            <person name="Maeda N."/>
            <person name="Oyama R."/>
            <person name="Ravasi T."/>
            <person name="Lenhard B."/>
            <person name="Wells C."/>
            <person name="Kodzius R."/>
            <person name="Shimokawa K."/>
            <person name="Bajic V.B."/>
            <person name="Brenner S.E."/>
            <person name="Batalov S."/>
            <person name="Forrest A.R."/>
            <person name="Zavolan M."/>
            <person name="Davis M.J."/>
            <person name="Wilming L.G."/>
            <person name="Aidinis V."/>
            <person name="Allen J.E."/>
            <person name="Ambesi-Impiombato A."/>
            <person name="Apweiler R."/>
            <person name="Aturaliya R.N."/>
            <person name="Bailey T.L."/>
            <person name="Bansal M."/>
            <person name="Baxter L."/>
            <person name="Beisel K.W."/>
            <person name="Bersano T."/>
            <person name="Bono H."/>
            <person name="Chalk A.M."/>
            <person name="Chiu K.P."/>
            <person name="Choudhary V."/>
            <person name="Christoffels A."/>
            <person name="Clutterbuck D.R."/>
            <person name="Crowe M.L."/>
            <person name="Dalla E."/>
            <person name="Dalrymple B.P."/>
            <person name="de Bono B."/>
            <person name="Della Gatta G."/>
            <person name="di Bernardo D."/>
            <person name="Down T."/>
            <person name="Engstrom P."/>
            <person name="Fagiolini M."/>
            <person name="Faulkner G."/>
            <person name="Fletcher C.F."/>
            <person name="Fukushima T."/>
            <person name="Furuno M."/>
            <person name="Futaki S."/>
            <person name="Gariboldi M."/>
            <person name="Georgii-Hemming P."/>
            <person name="Gingeras T.R."/>
            <person name="Gojobori T."/>
            <person name="Green R.E."/>
            <person name="Gustincich S."/>
            <person name="Harbers M."/>
            <person name="Hayashi Y."/>
            <person name="Hensch T.K."/>
            <person name="Hirokawa N."/>
            <person name="Hill D."/>
            <person name="Huminiecki L."/>
            <person name="Iacono M."/>
            <person name="Ikeo K."/>
            <person name="Iwama A."/>
            <person name="Ishikawa T."/>
            <person name="Jakt M."/>
            <person name="Kanapin A."/>
            <person name="Katoh M."/>
            <person name="Kawasawa Y."/>
            <person name="Kelso J."/>
            <person name="Kitamura H."/>
            <person name="Kitano H."/>
            <person name="Kollias G."/>
            <person name="Krishnan S.P."/>
            <person name="Kruger A."/>
            <person name="Kummerfeld S.K."/>
            <person name="Kurochkin I.V."/>
            <person name="Lareau L.F."/>
            <person name="Lazarevic D."/>
            <person name="Lipovich L."/>
            <person name="Liu J."/>
            <person name="Liuni S."/>
            <person name="McWilliam S."/>
            <person name="Madan Babu M."/>
            <person name="Madera M."/>
            <person name="Marchionni L."/>
            <person name="Matsuda H."/>
            <person name="Matsuzawa S."/>
            <person name="Miki H."/>
            <person name="Mignone F."/>
            <person name="Miyake S."/>
            <person name="Morris K."/>
            <person name="Mottagui-Tabar S."/>
            <person name="Mulder N."/>
            <person name="Nakano N."/>
            <person name="Nakauchi H."/>
            <person name="Ng P."/>
            <person name="Nilsson R."/>
            <person name="Nishiguchi S."/>
            <person name="Nishikawa S."/>
            <person name="Nori F."/>
            <person name="Ohara O."/>
            <person name="Okazaki Y."/>
            <person name="Orlando V."/>
            <person name="Pang K.C."/>
            <person name="Pavan W.J."/>
            <person name="Pavesi G."/>
            <person name="Pesole G."/>
            <person name="Petrovsky N."/>
            <person name="Piazza S."/>
            <person name="Reed J."/>
            <person name="Reid J.F."/>
            <person name="Ring B.Z."/>
            <person name="Ringwald M."/>
            <person name="Rost B."/>
            <person name="Ruan Y."/>
            <person name="Salzberg S.L."/>
            <person name="Sandelin A."/>
            <person name="Schneider C."/>
            <person name="Schoenbach C."/>
            <person name="Sekiguchi K."/>
            <person name="Semple C.A."/>
            <person name="Seno S."/>
            <person name="Sessa L."/>
            <person name="Sheng Y."/>
            <person name="Shibata Y."/>
            <person name="Shimada H."/>
            <person name="Shimada K."/>
            <person name="Silva D."/>
            <person name="Sinclair B."/>
            <person name="Sperling S."/>
            <person name="Stupka E."/>
            <person name="Sugiura K."/>
            <person name="Sultana R."/>
            <person name="Takenaka Y."/>
            <person name="Taki K."/>
            <person name="Tammoja K."/>
            <person name="Tan S.L."/>
            <person name="Tang S."/>
            <person name="Taylor M.S."/>
            <person name="Tegner J."/>
            <person name="Teichmann S.A."/>
            <person name="Ueda H.R."/>
            <person name="van Nimwegen E."/>
            <person name="Verardo R."/>
            <person name="Wei C.L."/>
            <person name="Yagi K."/>
            <person name="Yamanishi H."/>
            <person name="Zabarovsky E."/>
            <person name="Zhu S."/>
            <person name="Zimmer A."/>
            <person name="Hide W."/>
            <person name="Bult C."/>
            <person name="Grimmond S.M."/>
            <person name="Teasdale R.D."/>
            <person name="Liu E.T."/>
            <person name="Brusic V."/>
            <person name="Quackenbush J."/>
            <person name="Wahlestedt C."/>
            <person name="Mattick J.S."/>
            <person name="Hume D.A."/>
            <person name="Kai C."/>
            <person name="Sasaki D."/>
            <person name="Tomaru Y."/>
            <person name="Fukuda S."/>
            <person name="Kanamori-Katayama M."/>
            <person name="Suzuki M."/>
            <person name="Aoki J."/>
            <person name="Arakawa T."/>
            <person name="Iida J."/>
            <person name="Imamura K."/>
            <person name="Itoh M."/>
            <person name="Kato T."/>
            <person name="Kawaji H."/>
            <person name="Kawagashira N."/>
            <person name="Kawashima T."/>
            <person name="Kojima M."/>
            <person name="Kondo S."/>
            <person name="Konno H."/>
            <person name="Nakano K."/>
            <person name="Ninomiya N."/>
            <person name="Nishio T."/>
            <person name="Okada M."/>
            <person name="Plessy C."/>
            <person name="Shibata K."/>
            <person name="Shiraki T."/>
            <person name="Suzuki S."/>
            <person name="Tagami M."/>
            <person name="Waki K."/>
            <person name="Watahiki A."/>
            <person name="Okamura-Oho Y."/>
            <person name="Suzuki H."/>
            <person name="Kawai J."/>
            <person name="Hayashizaki Y."/>
        </authorList>
    </citation>
    <scope>NUCLEOTIDE SEQUENCE [LARGE SCALE MRNA] (ISOFORM 2)</scope>
    <source>
        <strain>C57BL/6J</strain>
        <tissue>Brain</tissue>
        <tissue>Cerebellum</tissue>
        <tissue>Medulla oblongata</tissue>
        <tissue>Retina</tissue>
    </source>
</reference>
<reference key="4">
    <citation type="journal article" date="1991" name="Cell">
        <title>RNA editing in brain controls a determinant of ion flow in glutamate-gated channels.</title>
        <authorList>
            <person name="Sommer B."/>
            <person name="Koehler M."/>
            <person name="Sprengel R."/>
            <person name="Seeburg P.H."/>
        </authorList>
    </citation>
    <scope>RNA EDITING OF POSITION 607</scope>
</reference>
<reference key="5">
    <citation type="journal article" date="1999" name="Biochem. Biophys. Res. Commun.">
        <title>rDLG6: a novel homolog of Drosophila DLG expressed in rat brain.</title>
        <authorList>
            <person name="Inagaki H."/>
            <person name="Maeda S."/>
            <person name="Lin K.H."/>
            <person name="Shimizu N."/>
            <person name="Saito T."/>
        </authorList>
    </citation>
    <scope>INTERACTION WITH MPP4</scope>
</reference>
<reference key="6">
    <citation type="journal article" date="1999" name="J. Neurochem.">
        <title>Phosphorylation of serine-880 in GluR2 by protein kinase C prevents its C terminus from binding with glutamate receptor-interacting protein.</title>
        <authorList>
            <person name="Matsuda S."/>
            <person name="Mikawa S."/>
            <person name="Hirai H."/>
        </authorList>
    </citation>
    <scope>PHOSPHORYLATION AT SER-880</scope>
</reference>
<reference key="7">
    <citation type="journal article" date="1999" name="Neuropharmacology">
        <title>The protein kinase C alpha binding protein PICK1 interacts with short but not long form alternative splice variants of AMPA receptor subunits.</title>
        <authorList>
            <person name="Dev K.K."/>
            <person name="Nishimune A."/>
            <person name="Henley J.M."/>
            <person name="Nakanishi S."/>
        </authorList>
    </citation>
    <scope>INTERACTION WITH PICK1 (ISOFORM 1)</scope>
</reference>
<reference key="8">
    <citation type="journal article" date="2003" name="J. Biol. Chem.">
        <title>The proteoglycan NG2 is complexed with alpha-amino-3-hydroxy-5-methyl-4-isoxazolepropionic acid (AMPA) receptors by the PDZ glutamate receptor interaction protein (GRIP) in glial progenitor cells. Implications for glial-neuronal signaling.</title>
        <authorList>
            <person name="Stegmueller J."/>
            <person name="Werner H."/>
            <person name="Nave K.-A."/>
            <person name="Trotter J."/>
        </authorList>
    </citation>
    <scope>INTERACTION WITH GRIP1 AND CSPG4</scope>
</reference>
<reference key="9">
    <citation type="journal article" date="2005" name="Neuron">
        <title>Differential regulation of AMPA receptor subunit trafficking by palmitoylation of two distinct sites.</title>
        <authorList>
            <person name="Hayashi T."/>
            <person name="Rumbaugh G."/>
            <person name="Huganir R.L."/>
        </authorList>
    </citation>
    <scope>PALMITOYLATION AT CYS-610 AND CYS-836</scope>
</reference>
<reference key="10">
    <citation type="journal article" date="2003" name="Neuron">
        <title>Glutamatergic plasticity by synaptic delivery of GluR-B(long)-containing AMPA receptors.</title>
        <authorList>
            <person name="Kolleker A."/>
            <person name="Zhu J.J."/>
            <person name="Schupp B.J."/>
            <person name="Qin Y."/>
            <person name="Mack V."/>
            <person name="Borchardt T."/>
            <person name="Koehr G."/>
            <person name="Malinow R."/>
            <person name="Seeburg P.H."/>
            <person name="Osten P."/>
        </authorList>
    </citation>
    <scope>IDENTIFICATION OF ISOFORM 3</scope>
    <scope>GLYCOSYLATION</scope>
    <scope>SUBCELLULAR LOCATION</scope>
    <scope>TISSUE SPECIFICITY</scope>
    <scope>DEVELOPMENTAL STAGE</scope>
</reference>
<reference key="11">
    <citation type="journal article" date="2004" name="J. Neurosci.">
        <title>Tyrosine phosphorylation and regulation of the AMPA receptor by SRC family tyrosine kinases.</title>
        <authorList>
            <person name="Hayashi T."/>
            <person name="Huganir R.L."/>
        </authorList>
    </citation>
    <scope>PHOSPHORYLATION AT TYR-876</scope>
    <scope>MUTAGENESIS OF TYR-869; TYR-873 AND TYR-876</scope>
    <scope>SUBCELLULAR LOCATION</scope>
    <scope>INTERACTION WITH GRIP1; GRIP2 AND PICK1</scope>
    <scope>TISSUE SPECIFICITY</scope>
</reference>
<reference key="12">
    <citation type="journal article" date="2008" name="Neuron">
        <title>Accumulation of AMPA receptors in autophagosomes in neuronal axons lacking adaptor protein AP-4.</title>
        <authorList>
            <person name="Matsuda S."/>
            <person name="Miura E."/>
            <person name="Matsuda K."/>
            <person name="Kakegawa W."/>
            <person name="Kohda K."/>
            <person name="Watanabe M."/>
            <person name="Yuzaki M."/>
        </authorList>
    </citation>
    <scope>INTERACTION WITH AP4B1; AP4E1 AND AP4M1</scope>
    <scope>SUBCELLULAR LOCATION</scope>
</reference>
<reference key="13">
    <citation type="journal article" date="2010" name="Cell">
        <title>A tissue-specific atlas of mouse protein phosphorylation and expression.</title>
        <authorList>
            <person name="Huttlin E.L."/>
            <person name="Jedrychowski M.P."/>
            <person name="Elias J.E."/>
            <person name="Goswami T."/>
            <person name="Rad R."/>
            <person name="Beausoleil S.A."/>
            <person name="Villen J."/>
            <person name="Haas W."/>
            <person name="Sowa M.E."/>
            <person name="Gygi S.P."/>
        </authorList>
    </citation>
    <scope>PHOSPHORYLATION [LARGE SCALE ANALYSIS] AT SER-860 AND SER-863</scope>
    <scope>IDENTIFICATION BY MASS SPECTROMETRY [LARGE SCALE ANALYSIS]</scope>
    <source>
        <tissue>Brain</tissue>
    </source>
</reference>
<reference key="14">
    <citation type="journal article" date="2010" name="Neuron">
        <title>SynDIG1: an activity-regulated, AMPA- receptor-interacting transmembrane protein that regulates excitatory synapse development.</title>
        <authorList>
            <person name="Kalashnikova E."/>
            <person name="Lorca R.A."/>
            <person name="Kaur I."/>
            <person name="Barisone G.A."/>
            <person name="Li B."/>
            <person name="Ishimaru T."/>
            <person name="Trimmer J.S."/>
            <person name="Mohapatra D.P."/>
            <person name="Diaz E."/>
        </authorList>
    </citation>
    <scope>INTERACTION WITH GRIA1 AND SYNDIG1</scope>
</reference>
<reference key="15">
    <citation type="journal article" date="2010" name="Neuron">
        <title>AMPA receptor signaling through BRAG2 and Arf6 critical for long-term synaptic depression.</title>
        <authorList>
            <person name="Scholz R."/>
            <person name="Berberich S."/>
            <person name="Rathgeber L."/>
            <person name="Kolleker A."/>
            <person name="Koehr G."/>
            <person name="Kornau H.C."/>
        </authorList>
    </citation>
    <scope>SUBCELLULAR LOCATION</scope>
    <scope>TISSUE SPECIFICITY</scope>
    <scope>DEVELOPMENTAL STAGE</scope>
</reference>
<reference key="16">
    <citation type="journal article" date="2011" name="Cell">
        <title>The AAA+ ATPase Thorase regulates AMPA receptor-dependent synaptic plasticity and behavior.</title>
        <authorList>
            <person name="Zhang J."/>
            <person name="Wang Y."/>
            <person name="Chi Z."/>
            <person name="Keuss M.J."/>
            <person name="Pai Y.M."/>
            <person name="Kang H.C."/>
            <person name="Shin J.H."/>
            <person name="Bugayenko A."/>
            <person name="Wang H."/>
            <person name="Xiong Y."/>
            <person name="Pletnikov M.V."/>
            <person name="Mattson M.P."/>
            <person name="Dawson T.M."/>
            <person name="Dawson V.L."/>
        </authorList>
    </citation>
    <scope>INTERACTION WITH ATAD1 AND GRIP1</scope>
</reference>
<reference key="17">
    <citation type="journal article" date="2013" name="Nat. Med.">
        <title>Loss of sorting nexin 27 contributes to excitatory synaptic dysfunction by modulating glutamate receptor recycling in Down's syndrome.</title>
        <authorList>
            <person name="Wang X."/>
            <person name="Zhao Y."/>
            <person name="Zhang X."/>
            <person name="Badie H."/>
            <person name="Zhou Y."/>
            <person name="Mu Y."/>
            <person name="Loo L.S."/>
            <person name="Cai L."/>
            <person name="Thompson R.C."/>
            <person name="Yang B."/>
            <person name="Chen Y."/>
            <person name="Johnson P.F."/>
            <person name="Wu C."/>
            <person name="Bu G."/>
            <person name="Mobley W.C."/>
            <person name="Zhang D."/>
            <person name="Gage F.H."/>
            <person name="Ranscht B."/>
            <person name="Zhang Y.W."/>
            <person name="Lipton S.A."/>
            <person name="Hong W."/>
            <person name="Xu H."/>
        </authorList>
    </citation>
    <scope>INTERACTION WITH SNX27</scope>
</reference>
<reference key="18">
    <citation type="journal article" date="2014" name="Exp. Neurol.">
        <title>Deletion of olfactomedin 2 induces changes in the AMPA receptor complex and impairs visual, olfactory, and motor functions in mice.</title>
        <authorList>
            <person name="Sultana A."/>
            <person name="Nakaya N."/>
            <person name="Dong L."/>
            <person name="Abu-Asab M."/>
            <person name="Qian H."/>
            <person name="Tomarev S.I."/>
        </authorList>
    </citation>
    <scope>INTERACTION WITH OLFM2</scope>
</reference>
<gene>
    <name evidence="21" type="primary">Gria2</name>
    <name evidence="2" type="synonym">GluA2</name>
    <name type="synonym">Glur2</name>
</gene>
<organism>
    <name type="scientific">Mus musculus</name>
    <name type="common">Mouse</name>
    <dbReference type="NCBI Taxonomy" id="10090"/>
    <lineage>
        <taxon>Eukaryota</taxon>
        <taxon>Metazoa</taxon>
        <taxon>Chordata</taxon>
        <taxon>Craniata</taxon>
        <taxon>Vertebrata</taxon>
        <taxon>Euteleostomi</taxon>
        <taxon>Mammalia</taxon>
        <taxon>Eutheria</taxon>
        <taxon>Euarchontoglires</taxon>
        <taxon>Glires</taxon>
        <taxon>Rodentia</taxon>
        <taxon>Myomorpha</taxon>
        <taxon>Muroidea</taxon>
        <taxon>Muridae</taxon>
        <taxon>Murinae</taxon>
        <taxon>Mus</taxon>
        <taxon>Mus</taxon>
    </lineage>
</organism>
<dbReference type="EMBL" id="X57498">
    <property type="protein sequence ID" value="CAA40735.1"/>
    <property type="molecule type" value="mRNA"/>
</dbReference>
<dbReference type="EMBL" id="L32204">
    <property type="protein sequence ID" value="AAC37653.1"/>
    <property type="molecule type" value="Genomic_DNA"/>
</dbReference>
<dbReference type="EMBL" id="L32189">
    <property type="protein sequence ID" value="AAC37653.1"/>
    <property type="status" value="JOINED"/>
    <property type="molecule type" value="Genomic_DNA"/>
</dbReference>
<dbReference type="EMBL" id="L32190">
    <property type="protein sequence ID" value="AAC37653.1"/>
    <property type="status" value="JOINED"/>
    <property type="molecule type" value="Genomic_DNA"/>
</dbReference>
<dbReference type="EMBL" id="L32192">
    <property type="protein sequence ID" value="AAC37653.1"/>
    <property type="status" value="JOINED"/>
    <property type="molecule type" value="Genomic_DNA"/>
</dbReference>
<dbReference type="EMBL" id="L32194">
    <property type="protein sequence ID" value="AAC37653.1"/>
    <property type="status" value="JOINED"/>
    <property type="molecule type" value="Genomic_DNA"/>
</dbReference>
<dbReference type="EMBL" id="L32196">
    <property type="protein sequence ID" value="AAC37653.1"/>
    <property type="status" value="JOINED"/>
    <property type="molecule type" value="Genomic_DNA"/>
</dbReference>
<dbReference type="EMBL" id="L32198">
    <property type="protein sequence ID" value="AAC37653.1"/>
    <property type="status" value="JOINED"/>
    <property type="molecule type" value="Genomic_DNA"/>
</dbReference>
<dbReference type="EMBL" id="L32200">
    <property type="protein sequence ID" value="AAC37653.1"/>
    <property type="status" value="JOINED"/>
    <property type="molecule type" value="Genomic_DNA"/>
</dbReference>
<dbReference type="EMBL" id="L32202">
    <property type="protein sequence ID" value="AAC37653.1"/>
    <property type="status" value="JOINED"/>
    <property type="molecule type" value="Genomic_DNA"/>
</dbReference>
<dbReference type="EMBL" id="L32203">
    <property type="protein sequence ID" value="AAC37653.1"/>
    <property type="status" value="JOINED"/>
    <property type="molecule type" value="Genomic_DNA"/>
</dbReference>
<dbReference type="EMBL" id="L32201">
    <property type="protein sequence ID" value="AAC37653.1"/>
    <property type="status" value="JOINED"/>
    <property type="molecule type" value="Genomic_DNA"/>
</dbReference>
<dbReference type="EMBL" id="L32199">
    <property type="protein sequence ID" value="AAC37653.1"/>
    <property type="status" value="JOINED"/>
    <property type="molecule type" value="Genomic_DNA"/>
</dbReference>
<dbReference type="EMBL" id="L32197">
    <property type="protein sequence ID" value="AAC37653.1"/>
    <property type="status" value="JOINED"/>
    <property type="molecule type" value="Genomic_DNA"/>
</dbReference>
<dbReference type="EMBL" id="L32195">
    <property type="protein sequence ID" value="AAC37653.1"/>
    <property type="status" value="JOINED"/>
    <property type="molecule type" value="Genomic_DNA"/>
</dbReference>
<dbReference type="EMBL" id="L32193">
    <property type="protein sequence ID" value="AAC37653.1"/>
    <property type="status" value="JOINED"/>
    <property type="molecule type" value="Genomic_DNA"/>
</dbReference>
<dbReference type="EMBL" id="L32191">
    <property type="protein sequence ID" value="AAC37653.1"/>
    <property type="status" value="JOINED"/>
    <property type="molecule type" value="Genomic_DNA"/>
</dbReference>
<dbReference type="EMBL" id="L32372">
    <property type="protein sequence ID" value="AAC37654.1"/>
    <property type="molecule type" value="Genomic_DNA"/>
</dbReference>
<dbReference type="EMBL" id="L32189">
    <property type="protein sequence ID" value="AAC37654.1"/>
    <property type="status" value="JOINED"/>
    <property type="molecule type" value="Genomic_DNA"/>
</dbReference>
<dbReference type="EMBL" id="L32190">
    <property type="protein sequence ID" value="AAC37654.1"/>
    <property type="status" value="JOINED"/>
    <property type="molecule type" value="Genomic_DNA"/>
</dbReference>
<dbReference type="EMBL" id="L32191">
    <property type="protein sequence ID" value="AAC37654.1"/>
    <property type="status" value="JOINED"/>
    <property type="molecule type" value="Genomic_DNA"/>
</dbReference>
<dbReference type="EMBL" id="L32192">
    <property type="protein sequence ID" value="AAC37654.1"/>
    <property type="status" value="JOINED"/>
    <property type="molecule type" value="Genomic_DNA"/>
</dbReference>
<dbReference type="EMBL" id="L32193">
    <property type="protein sequence ID" value="AAC37654.1"/>
    <property type="status" value="JOINED"/>
    <property type="molecule type" value="Genomic_DNA"/>
</dbReference>
<dbReference type="EMBL" id="L32194">
    <property type="protein sequence ID" value="AAC37654.1"/>
    <property type="status" value="JOINED"/>
    <property type="molecule type" value="Genomic_DNA"/>
</dbReference>
<dbReference type="EMBL" id="L32195">
    <property type="protein sequence ID" value="AAC37654.1"/>
    <property type="status" value="JOINED"/>
    <property type="molecule type" value="Genomic_DNA"/>
</dbReference>
<dbReference type="EMBL" id="L32196">
    <property type="protein sequence ID" value="AAC37654.1"/>
    <property type="status" value="JOINED"/>
    <property type="molecule type" value="Genomic_DNA"/>
</dbReference>
<dbReference type="EMBL" id="L32197">
    <property type="protein sequence ID" value="AAC37654.1"/>
    <property type="status" value="JOINED"/>
    <property type="molecule type" value="Genomic_DNA"/>
</dbReference>
<dbReference type="EMBL" id="L32198">
    <property type="protein sequence ID" value="AAC37654.1"/>
    <property type="status" value="JOINED"/>
    <property type="molecule type" value="Genomic_DNA"/>
</dbReference>
<dbReference type="EMBL" id="L32199">
    <property type="protein sequence ID" value="AAC37654.1"/>
    <property type="status" value="JOINED"/>
    <property type="molecule type" value="Genomic_DNA"/>
</dbReference>
<dbReference type="EMBL" id="L32200">
    <property type="protein sequence ID" value="AAC37654.1"/>
    <property type="status" value="JOINED"/>
    <property type="molecule type" value="Genomic_DNA"/>
</dbReference>
<dbReference type="EMBL" id="L32201">
    <property type="protein sequence ID" value="AAC37654.1"/>
    <property type="status" value="JOINED"/>
    <property type="molecule type" value="Genomic_DNA"/>
</dbReference>
<dbReference type="EMBL" id="L32202">
    <property type="protein sequence ID" value="AAC37654.1"/>
    <property type="status" value="JOINED"/>
    <property type="molecule type" value="Genomic_DNA"/>
</dbReference>
<dbReference type="EMBL" id="L32203">
    <property type="protein sequence ID" value="AAC37654.1"/>
    <property type="status" value="JOINED"/>
    <property type="molecule type" value="Genomic_DNA"/>
</dbReference>
<dbReference type="EMBL" id="L32204">
    <property type="protein sequence ID" value="AAC37654.1"/>
    <property type="status" value="JOINED"/>
    <property type="molecule type" value="Genomic_DNA"/>
</dbReference>
<dbReference type="EMBL" id="AK014389">
    <property type="protein sequence ID" value="BAB29316.1"/>
    <property type="molecule type" value="mRNA"/>
</dbReference>
<dbReference type="EMBL" id="AK043490">
    <property type="protein sequence ID" value="BAC31557.1"/>
    <property type="molecule type" value="mRNA"/>
</dbReference>
<dbReference type="EMBL" id="AK044574">
    <property type="protein sequence ID" value="BAC31986.1"/>
    <property type="molecule type" value="mRNA"/>
</dbReference>
<dbReference type="EMBL" id="AK046861">
    <property type="protein sequence ID" value="BAC32899.1"/>
    <property type="molecule type" value="mRNA"/>
</dbReference>
<dbReference type="CCDS" id="CCDS17423.1">
    <molecule id="P23819-1"/>
</dbReference>
<dbReference type="PIR" id="I49695">
    <property type="entry name" value="I49695"/>
</dbReference>
<dbReference type="PIR" id="I49696">
    <property type="entry name" value="I49696"/>
</dbReference>
<dbReference type="PDB" id="7LDD">
    <property type="method" value="EM"/>
    <property type="resolution" value="3.40 A"/>
    <property type="chains" value="B/D=1-883"/>
</dbReference>
<dbReference type="PDB" id="7LDE">
    <property type="method" value="EM"/>
    <property type="resolution" value="3.90 A"/>
    <property type="chains" value="B/D=1-883"/>
</dbReference>
<dbReference type="PDB" id="7LEP">
    <property type="method" value="EM"/>
    <property type="resolution" value="3.25 A"/>
    <property type="chains" value="B/D=417-840"/>
</dbReference>
<dbReference type="PDBsum" id="7LDD"/>
<dbReference type="PDBsum" id="7LDE"/>
<dbReference type="PDBsum" id="7LEP"/>
<dbReference type="EMDB" id="EMD-23285"/>
<dbReference type="EMDB" id="EMD-23286"/>
<dbReference type="EMDB" id="EMD-23287"/>
<dbReference type="EMDB" id="EMD-23288"/>
<dbReference type="SMR" id="P23819"/>
<dbReference type="BioGRID" id="200059">
    <property type="interactions" value="165"/>
</dbReference>
<dbReference type="CORUM" id="P23819"/>
<dbReference type="FunCoup" id="P23819">
    <property type="interactions" value="357"/>
</dbReference>
<dbReference type="IntAct" id="P23819">
    <property type="interactions" value="36"/>
</dbReference>
<dbReference type="MINT" id="P23819"/>
<dbReference type="STRING" id="10090.ENSMUSP00000074787"/>
<dbReference type="ChEMBL" id="CHEMBL2096617"/>
<dbReference type="GlyConnect" id="2342">
    <property type="glycosylation" value="9 N-Linked glycans (3 sites)"/>
</dbReference>
<dbReference type="GlyCosmos" id="P23819">
    <property type="glycosylation" value="4 sites, 9 glycans"/>
</dbReference>
<dbReference type="GlyGen" id="P23819">
    <property type="glycosylation" value="5 sites, 13 N-linked glycans (4 sites), 1 O-linked glycan (1 site)"/>
</dbReference>
<dbReference type="iPTMnet" id="P23819"/>
<dbReference type="MetOSite" id="P23819"/>
<dbReference type="PhosphoSitePlus" id="P23819"/>
<dbReference type="SwissPalm" id="P23819"/>
<dbReference type="PaxDb" id="10090-ENSMUSP00000074787"/>
<dbReference type="PeptideAtlas" id="P23819"/>
<dbReference type="ProteomicsDB" id="271299">
    <molecule id="P23819-1"/>
</dbReference>
<dbReference type="ProteomicsDB" id="271300">
    <molecule id="P23819-2"/>
</dbReference>
<dbReference type="ProteomicsDB" id="271301">
    <molecule id="P23819-3"/>
</dbReference>
<dbReference type="ProteomicsDB" id="271302">
    <molecule id="P23819-4"/>
</dbReference>
<dbReference type="ABCD" id="P23819">
    <property type="antibodies" value="2 sequenced antibodies"/>
</dbReference>
<dbReference type="UCSC" id="uc008pof.1">
    <molecule id="P23819-1"/>
    <property type="organism name" value="mouse"/>
</dbReference>
<dbReference type="AGR" id="MGI:95809"/>
<dbReference type="MGI" id="MGI:95809">
    <property type="gene designation" value="Gria2"/>
</dbReference>
<dbReference type="eggNOG" id="KOG1054">
    <property type="taxonomic scope" value="Eukaryota"/>
</dbReference>
<dbReference type="InParanoid" id="P23819"/>
<dbReference type="PhylomeDB" id="P23819"/>
<dbReference type="Reactome" id="R-MMU-399710">
    <property type="pathway name" value="Activation of AMPA receptors"/>
</dbReference>
<dbReference type="Reactome" id="R-MMU-416993">
    <property type="pathway name" value="Trafficking of GluR2-containing AMPA receptors"/>
</dbReference>
<dbReference type="Reactome" id="R-MMU-438066">
    <property type="pathway name" value="Unblocking of NMDA receptors, glutamate binding and activation"/>
</dbReference>
<dbReference type="BioGRID-ORCS" id="14800">
    <property type="hits" value="1 hit in 76 CRISPR screens"/>
</dbReference>
<dbReference type="CD-CODE" id="CE726F99">
    <property type="entry name" value="Postsynaptic density"/>
</dbReference>
<dbReference type="ChiTaRS" id="Gria2">
    <property type="organism name" value="mouse"/>
</dbReference>
<dbReference type="PRO" id="PR:P23819"/>
<dbReference type="Proteomes" id="UP000000589">
    <property type="component" value="Unplaced"/>
</dbReference>
<dbReference type="RNAct" id="P23819">
    <property type="molecule type" value="protein"/>
</dbReference>
<dbReference type="GO" id="GO:0032281">
    <property type="term" value="C:AMPA glutamate receptor complex"/>
    <property type="evidence" value="ECO:0000314"/>
    <property type="project" value="MGI"/>
</dbReference>
<dbReference type="GO" id="GO:0030425">
    <property type="term" value="C:dendrite"/>
    <property type="evidence" value="ECO:0000314"/>
    <property type="project" value="MGI"/>
</dbReference>
<dbReference type="GO" id="GO:0005783">
    <property type="term" value="C:endoplasmic reticulum"/>
    <property type="evidence" value="ECO:0000314"/>
    <property type="project" value="MGI"/>
</dbReference>
<dbReference type="GO" id="GO:0098978">
    <property type="term" value="C:glutamatergic synapse"/>
    <property type="evidence" value="ECO:0000314"/>
    <property type="project" value="SynGO"/>
</dbReference>
<dbReference type="GO" id="GO:0016020">
    <property type="term" value="C:membrane"/>
    <property type="evidence" value="ECO:0000314"/>
    <property type="project" value="MGI"/>
</dbReference>
<dbReference type="GO" id="GO:0043005">
    <property type="term" value="C:neuron projection"/>
    <property type="evidence" value="ECO:0000314"/>
    <property type="project" value="BHF-UCL"/>
</dbReference>
<dbReference type="GO" id="GO:0099544">
    <property type="term" value="C:perisynaptic space"/>
    <property type="evidence" value="ECO:0000314"/>
    <property type="project" value="MGI"/>
</dbReference>
<dbReference type="GO" id="GO:0005886">
    <property type="term" value="C:plasma membrane"/>
    <property type="evidence" value="ECO:0000314"/>
    <property type="project" value="MGI"/>
</dbReference>
<dbReference type="GO" id="GO:0014069">
    <property type="term" value="C:postsynaptic density"/>
    <property type="evidence" value="ECO:0000314"/>
    <property type="project" value="ARUK-UCL"/>
</dbReference>
<dbReference type="GO" id="GO:0098839">
    <property type="term" value="C:postsynaptic density membrane"/>
    <property type="evidence" value="ECO:0000314"/>
    <property type="project" value="MGI"/>
</dbReference>
<dbReference type="GO" id="GO:0045211">
    <property type="term" value="C:postsynaptic membrane"/>
    <property type="evidence" value="ECO:0000314"/>
    <property type="project" value="MGI"/>
</dbReference>
<dbReference type="GO" id="GO:0098685">
    <property type="term" value="C:Schaffer collateral - CA1 synapse"/>
    <property type="evidence" value="ECO:0000314"/>
    <property type="project" value="SynGO"/>
</dbReference>
<dbReference type="GO" id="GO:0036477">
    <property type="term" value="C:somatodendritic compartment"/>
    <property type="evidence" value="ECO:0000314"/>
    <property type="project" value="UniProtKB"/>
</dbReference>
<dbReference type="GO" id="GO:0045202">
    <property type="term" value="C:synapse"/>
    <property type="evidence" value="ECO:0000314"/>
    <property type="project" value="MGI"/>
</dbReference>
<dbReference type="GO" id="GO:0097060">
    <property type="term" value="C:synaptic membrane"/>
    <property type="evidence" value="ECO:0000314"/>
    <property type="project" value="MGI"/>
</dbReference>
<dbReference type="GO" id="GO:0008021">
    <property type="term" value="C:synaptic vesicle"/>
    <property type="evidence" value="ECO:0000314"/>
    <property type="project" value="MGI"/>
</dbReference>
<dbReference type="GO" id="GO:0030672">
    <property type="term" value="C:synaptic vesicle membrane"/>
    <property type="evidence" value="ECO:0000314"/>
    <property type="project" value="MGI"/>
</dbReference>
<dbReference type="GO" id="GO:0004971">
    <property type="term" value="F:AMPA glutamate receptor activity"/>
    <property type="evidence" value="ECO:0000250"/>
    <property type="project" value="UniProtKB"/>
</dbReference>
<dbReference type="GO" id="GO:0005234">
    <property type="term" value="F:extracellularly glutamate-gated ion channel activity"/>
    <property type="evidence" value="ECO:0000314"/>
    <property type="project" value="MGI"/>
</dbReference>
<dbReference type="GO" id="GO:0004970">
    <property type="term" value="F:glutamate-gated receptor activity"/>
    <property type="evidence" value="ECO:0000314"/>
    <property type="project" value="MGI"/>
</dbReference>
<dbReference type="GO" id="GO:0015277">
    <property type="term" value="F:kainate selective glutamate receptor activity"/>
    <property type="evidence" value="ECO:0000250"/>
    <property type="project" value="UniProtKB"/>
</dbReference>
<dbReference type="GO" id="GO:0099094">
    <property type="term" value="F:ligand-gated monoatomic cation channel activity"/>
    <property type="evidence" value="ECO:0000250"/>
    <property type="project" value="UniProtKB"/>
</dbReference>
<dbReference type="GO" id="GO:1904315">
    <property type="term" value="F:transmitter-gated monoatomic ion channel activity involved in regulation of postsynaptic membrane potential"/>
    <property type="evidence" value="ECO:0000314"/>
    <property type="project" value="SynGO"/>
</dbReference>
<dbReference type="GO" id="GO:0007268">
    <property type="term" value="P:chemical synaptic transmission"/>
    <property type="evidence" value="ECO:0000314"/>
    <property type="project" value="MGI"/>
</dbReference>
<dbReference type="CDD" id="cd06389">
    <property type="entry name" value="PBP1_iGluR_AMPA_GluR2"/>
    <property type="match status" value="1"/>
</dbReference>
<dbReference type="CDD" id="cd13715">
    <property type="entry name" value="PBP2_iGluR_AMPA"/>
    <property type="match status" value="1"/>
</dbReference>
<dbReference type="FunFam" id="1.10.287.70:FF:000067">
    <property type="entry name" value="glutamate receptor 2 isoform X1"/>
    <property type="match status" value="1"/>
</dbReference>
<dbReference type="FunFam" id="1.10.287.70:FF:000099">
    <property type="entry name" value="glutamate receptor 2 isoform X1"/>
    <property type="match status" value="1"/>
</dbReference>
<dbReference type="FunFam" id="3.40.190.10:FF:000001">
    <property type="entry name" value="Glutamate receptor ionotropic, kainate 2"/>
    <property type="match status" value="1"/>
</dbReference>
<dbReference type="FunFam" id="3.40.50.2300:FF:000004">
    <property type="entry name" value="Glutamate receptor, ionotropic, AMPA 2"/>
    <property type="match status" value="1"/>
</dbReference>
<dbReference type="FunFam" id="3.40.190.10:FF:000666">
    <property type="entry name" value="Glutamate receptor, ionotropic, AMPA 2a"/>
    <property type="match status" value="1"/>
</dbReference>
<dbReference type="Gene3D" id="1.10.287.70">
    <property type="match status" value="2"/>
</dbReference>
<dbReference type="Gene3D" id="3.40.50.2300">
    <property type="match status" value="2"/>
</dbReference>
<dbReference type="Gene3D" id="3.40.190.10">
    <property type="entry name" value="Periplasmic binding protein-like II"/>
    <property type="match status" value="2"/>
</dbReference>
<dbReference type="InterPro" id="IPR001828">
    <property type="entry name" value="ANF_lig-bd_rcpt"/>
</dbReference>
<dbReference type="InterPro" id="IPR019594">
    <property type="entry name" value="Glu/Gly-bd"/>
</dbReference>
<dbReference type="InterPro" id="IPR001508">
    <property type="entry name" value="Iono_Glu_rcpt_met"/>
</dbReference>
<dbReference type="InterPro" id="IPR015683">
    <property type="entry name" value="Ionotropic_Glu_rcpt"/>
</dbReference>
<dbReference type="InterPro" id="IPR001320">
    <property type="entry name" value="Iontro_rcpt_C"/>
</dbReference>
<dbReference type="InterPro" id="IPR028082">
    <property type="entry name" value="Peripla_BP_I"/>
</dbReference>
<dbReference type="PANTHER" id="PTHR18966">
    <property type="entry name" value="IONOTROPIC GLUTAMATE RECEPTOR"/>
    <property type="match status" value="1"/>
</dbReference>
<dbReference type="Pfam" id="PF01094">
    <property type="entry name" value="ANF_receptor"/>
    <property type="match status" value="1"/>
</dbReference>
<dbReference type="Pfam" id="PF00060">
    <property type="entry name" value="Lig_chan"/>
    <property type="match status" value="1"/>
</dbReference>
<dbReference type="Pfam" id="PF10613">
    <property type="entry name" value="Lig_chan-Glu_bd"/>
    <property type="match status" value="1"/>
</dbReference>
<dbReference type="PRINTS" id="PR00177">
    <property type="entry name" value="NMDARECEPTOR"/>
</dbReference>
<dbReference type="SMART" id="SM00918">
    <property type="entry name" value="Lig_chan-Glu_bd"/>
    <property type="match status" value="1"/>
</dbReference>
<dbReference type="SMART" id="SM00079">
    <property type="entry name" value="PBPe"/>
    <property type="match status" value="1"/>
</dbReference>
<dbReference type="SUPFAM" id="SSF53822">
    <property type="entry name" value="Periplasmic binding protein-like I"/>
    <property type="match status" value="1"/>
</dbReference>
<dbReference type="SUPFAM" id="SSF53850">
    <property type="entry name" value="Periplasmic binding protein-like II"/>
    <property type="match status" value="1"/>
</dbReference>
<dbReference type="SUPFAM" id="SSF81324">
    <property type="entry name" value="Voltage-gated potassium channels"/>
    <property type="match status" value="1"/>
</dbReference>